<dbReference type="EMBL" id="CU928164">
    <property type="protein sequence ID" value="CAR19374.1"/>
    <property type="molecule type" value="Genomic_DNA"/>
</dbReference>
<dbReference type="RefSeq" id="WP_000004624.1">
    <property type="nucleotide sequence ID" value="NC_011750.1"/>
</dbReference>
<dbReference type="RefSeq" id="YP_002409179.1">
    <property type="nucleotide sequence ID" value="NC_011750.1"/>
</dbReference>
<dbReference type="SMR" id="B7NVY1"/>
<dbReference type="STRING" id="585057.ECIAI39_3255"/>
<dbReference type="KEGG" id="ect:ECIAI39_3255"/>
<dbReference type="PATRIC" id="fig|585057.6.peg.3381"/>
<dbReference type="HOGENOM" id="CLU_047399_0_0_6"/>
<dbReference type="Proteomes" id="UP000000749">
    <property type="component" value="Chromosome"/>
</dbReference>
<dbReference type="GO" id="GO:0005886">
    <property type="term" value="C:plasma membrane"/>
    <property type="evidence" value="ECO:0007669"/>
    <property type="project" value="UniProtKB-SubCell"/>
</dbReference>
<dbReference type="GO" id="GO:0051978">
    <property type="term" value="F:lysophospholipid:sodium symporter activity"/>
    <property type="evidence" value="ECO:0007669"/>
    <property type="project" value="InterPro"/>
</dbReference>
<dbReference type="CDD" id="cd06173">
    <property type="entry name" value="MFS_MefA_like"/>
    <property type="match status" value="1"/>
</dbReference>
<dbReference type="FunFam" id="1.20.1250.20:FF:000091">
    <property type="entry name" value="Lysophospholipid transporter LplT"/>
    <property type="match status" value="1"/>
</dbReference>
<dbReference type="Gene3D" id="1.20.1250.20">
    <property type="entry name" value="MFS general substrate transporter like domains"/>
    <property type="match status" value="1"/>
</dbReference>
<dbReference type="HAMAP" id="MF_01585">
    <property type="entry name" value="MFS_LplT"/>
    <property type="match status" value="1"/>
</dbReference>
<dbReference type="InterPro" id="IPR023727">
    <property type="entry name" value="LysoPLipid__transptr_LplT"/>
</dbReference>
<dbReference type="InterPro" id="IPR011701">
    <property type="entry name" value="MFS"/>
</dbReference>
<dbReference type="InterPro" id="IPR036259">
    <property type="entry name" value="MFS_trans_sf"/>
</dbReference>
<dbReference type="NCBIfam" id="NF008397">
    <property type="entry name" value="PRK11195.1"/>
    <property type="match status" value="1"/>
</dbReference>
<dbReference type="PANTHER" id="PTHR43266">
    <property type="entry name" value="MACROLIDE-EFFLUX PROTEIN"/>
    <property type="match status" value="1"/>
</dbReference>
<dbReference type="PANTHER" id="PTHR43266:SF2">
    <property type="entry name" value="MAJOR FACILITATOR SUPERFAMILY (MFS) PROFILE DOMAIN-CONTAINING PROTEIN"/>
    <property type="match status" value="1"/>
</dbReference>
<dbReference type="Pfam" id="PF07690">
    <property type="entry name" value="MFS_1"/>
    <property type="match status" value="1"/>
</dbReference>
<dbReference type="SUPFAM" id="SSF103473">
    <property type="entry name" value="MFS general substrate transporter"/>
    <property type="match status" value="1"/>
</dbReference>
<evidence type="ECO:0000255" key="1">
    <source>
        <dbReference type="HAMAP-Rule" id="MF_01585"/>
    </source>
</evidence>
<gene>
    <name evidence="1" type="primary">lplT</name>
    <name type="ordered locus">ECIAI39_3255</name>
</gene>
<organism>
    <name type="scientific">Escherichia coli O7:K1 (strain IAI39 / ExPEC)</name>
    <dbReference type="NCBI Taxonomy" id="585057"/>
    <lineage>
        <taxon>Bacteria</taxon>
        <taxon>Pseudomonadati</taxon>
        <taxon>Pseudomonadota</taxon>
        <taxon>Gammaproteobacteria</taxon>
        <taxon>Enterobacterales</taxon>
        <taxon>Enterobacteriaceae</taxon>
        <taxon>Escherichia</taxon>
    </lineage>
</organism>
<sequence length="397" mass="41597">MSESVHTNTSLWSKGMKAVIVAQFLSAFGDNALLFATLALLKAQFYPEWSQPILQMVFVGAYILFAPFVGQVADSFAKGRVMMFANGLKLLGAASICFGINPFLGYTLVGVGAAAYSPAKYGILGELTTGSKLVKANGLMEASTIAAILLGSVAGGVLADWHVLVALAACALAYGGAVVANIYIPKLAAARPGQSWNLISMTRSFLNACTSLWRNGETRFSLVGTSLFWGAGVTLRFLLVLWVPVALGITDNATPTYLNAMVAIGIVVGAGAAAKLVTLETVSRCMPAGILIGVVVLIFSLQHELLPAYALLMLIGVLGGFFVVPLNALLQERGKKSVGAGNAIAVQNLGENSAMLLMLGIYSLAVMVGIPVVPIGIGFGALFALAITALWIWQRRH</sequence>
<accession>B7NVY1</accession>
<name>LPLT_ECO7I</name>
<comment type="function">
    <text evidence="1">Catalyzes the facilitated diffusion of 2-acyl-glycero-3-phosphoethanolamine (2-acyl-GPE) into the cell.</text>
</comment>
<comment type="subcellular location">
    <subcellularLocation>
        <location evidence="1">Cell inner membrane</location>
        <topology evidence="1">Multi-pass membrane protein</topology>
    </subcellularLocation>
</comment>
<comment type="similarity">
    <text evidence="1">Belongs to the major facilitator superfamily. LplT (TC 2.A.1.42) family.</text>
</comment>
<protein>
    <recommendedName>
        <fullName evidence="1">Lysophospholipid transporter LplT</fullName>
    </recommendedName>
</protein>
<proteinExistence type="inferred from homology"/>
<keyword id="KW-0997">Cell inner membrane</keyword>
<keyword id="KW-1003">Cell membrane</keyword>
<keyword id="KW-0445">Lipid transport</keyword>
<keyword id="KW-0472">Membrane</keyword>
<keyword id="KW-0812">Transmembrane</keyword>
<keyword id="KW-1133">Transmembrane helix</keyword>
<keyword id="KW-0813">Transport</keyword>
<reference key="1">
    <citation type="journal article" date="2009" name="PLoS Genet.">
        <title>Organised genome dynamics in the Escherichia coli species results in highly diverse adaptive paths.</title>
        <authorList>
            <person name="Touchon M."/>
            <person name="Hoede C."/>
            <person name="Tenaillon O."/>
            <person name="Barbe V."/>
            <person name="Baeriswyl S."/>
            <person name="Bidet P."/>
            <person name="Bingen E."/>
            <person name="Bonacorsi S."/>
            <person name="Bouchier C."/>
            <person name="Bouvet O."/>
            <person name="Calteau A."/>
            <person name="Chiapello H."/>
            <person name="Clermont O."/>
            <person name="Cruveiller S."/>
            <person name="Danchin A."/>
            <person name="Diard M."/>
            <person name="Dossat C."/>
            <person name="Karoui M.E."/>
            <person name="Frapy E."/>
            <person name="Garry L."/>
            <person name="Ghigo J.M."/>
            <person name="Gilles A.M."/>
            <person name="Johnson J."/>
            <person name="Le Bouguenec C."/>
            <person name="Lescat M."/>
            <person name="Mangenot S."/>
            <person name="Martinez-Jehanne V."/>
            <person name="Matic I."/>
            <person name="Nassif X."/>
            <person name="Oztas S."/>
            <person name="Petit M.A."/>
            <person name="Pichon C."/>
            <person name="Rouy Z."/>
            <person name="Ruf C.S."/>
            <person name="Schneider D."/>
            <person name="Tourret J."/>
            <person name="Vacherie B."/>
            <person name="Vallenet D."/>
            <person name="Medigue C."/>
            <person name="Rocha E.P.C."/>
            <person name="Denamur E."/>
        </authorList>
    </citation>
    <scope>NUCLEOTIDE SEQUENCE [LARGE SCALE GENOMIC DNA]</scope>
    <source>
        <strain>IAI39 / ExPEC</strain>
    </source>
</reference>
<feature type="chain" id="PRO_1000201269" description="Lysophospholipid transporter LplT">
    <location>
        <begin position="1"/>
        <end position="397"/>
    </location>
</feature>
<feature type="topological domain" description="Periplasmic" evidence="1">
    <location>
        <begin position="1"/>
        <end position="17"/>
    </location>
</feature>
<feature type="transmembrane region" description="Helical" evidence="1">
    <location>
        <begin position="18"/>
        <end position="38"/>
    </location>
</feature>
<feature type="topological domain" description="Cytoplasmic" evidence="1">
    <location>
        <begin position="39"/>
        <end position="52"/>
    </location>
</feature>
<feature type="transmembrane region" description="Helical" evidence="1">
    <location>
        <begin position="53"/>
        <end position="73"/>
    </location>
</feature>
<feature type="topological domain" description="Periplasmic" evidence="1">
    <location>
        <begin position="74"/>
        <end position="90"/>
    </location>
</feature>
<feature type="transmembrane region" description="Helical" evidence="1">
    <location>
        <begin position="91"/>
        <end position="111"/>
    </location>
</feature>
<feature type="topological domain" description="Cytoplasmic" evidence="1">
    <location>
        <begin position="112"/>
        <end position="144"/>
    </location>
</feature>
<feature type="transmembrane region" description="Helical" evidence="1">
    <location>
        <begin position="145"/>
        <end position="165"/>
    </location>
</feature>
<feature type="topological domain" description="Periplasmic" evidence="1">
    <location>
        <position position="166"/>
    </location>
</feature>
<feature type="transmembrane region" description="Helical" evidence="1">
    <location>
        <begin position="167"/>
        <end position="187"/>
    </location>
</feature>
<feature type="topological domain" description="Cytoplasmic" evidence="1">
    <location>
        <begin position="188"/>
        <end position="226"/>
    </location>
</feature>
<feature type="transmembrane region" description="Helical" evidence="1">
    <location>
        <begin position="227"/>
        <end position="247"/>
    </location>
</feature>
<feature type="topological domain" description="Periplasmic" evidence="1">
    <location>
        <begin position="248"/>
        <end position="256"/>
    </location>
</feature>
<feature type="transmembrane region" description="Helical" evidence="1">
    <location>
        <begin position="257"/>
        <end position="277"/>
    </location>
</feature>
<feature type="topological domain" description="Cytoplasmic" evidence="1">
    <location>
        <begin position="278"/>
        <end position="280"/>
    </location>
</feature>
<feature type="transmembrane region" description="Helical" evidence="1">
    <location>
        <begin position="281"/>
        <end position="301"/>
    </location>
</feature>
<feature type="topological domain" description="Periplasmic" evidence="1">
    <location>
        <begin position="302"/>
        <end position="304"/>
    </location>
</feature>
<feature type="transmembrane region" description="Helical" evidence="1">
    <location>
        <begin position="305"/>
        <end position="325"/>
    </location>
</feature>
<feature type="topological domain" description="Cytoplasmic" evidence="1">
    <location>
        <begin position="326"/>
        <end position="343"/>
    </location>
</feature>
<feature type="transmembrane region" description="Helical" evidence="1">
    <location>
        <begin position="344"/>
        <end position="364"/>
    </location>
</feature>
<feature type="topological domain" description="Periplasmic" evidence="1">
    <location>
        <begin position="365"/>
        <end position="366"/>
    </location>
</feature>
<feature type="transmembrane region" description="Helical" evidence="1">
    <location>
        <begin position="367"/>
        <end position="387"/>
    </location>
</feature>
<feature type="topological domain" description="Cytoplasmic" evidence="1">
    <location>
        <begin position="388"/>
        <end position="397"/>
    </location>
</feature>